<proteinExistence type="inferred from homology"/>
<protein>
    <recommendedName>
        <fullName evidence="1">Aminomethyltransferase</fullName>
        <ecNumber evidence="1">2.1.2.10</ecNumber>
    </recommendedName>
    <alternativeName>
        <fullName evidence="1">Glycine cleavage system T protein</fullName>
    </alternativeName>
</protein>
<reference key="1">
    <citation type="journal article" date="2001" name="Nature">
        <title>Complete genome sequence of a multiple drug resistant Salmonella enterica serovar Typhi CT18.</title>
        <authorList>
            <person name="Parkhill J."/>
            <person name="Dougan G."/>
            <person name="James K.D."/>
            <person name="Thomson N.R."/>
            <person name="Pickard D."/>
            <person name="Wain J."/>
            <person name="Churcher C.M."/>
            <person name="Mungall K.L."/>
            <person name="Bentley S.D."/>
            <person name="Holden M.T.G."/>
            <person name="Sebaihia M."/>
            <person name="Baker S."/>
            <person name="Basham D."/>
            <person name="Brooks K."/>
            <person name="Chillingworth T."/>
            <person name="Connerton P."/>
            <person name="Cronin A."/>
            <person name="Davis P."/>
            <person name="Davies R.M."/>
            <person name="Dowd L."/>
            <person name="White N."/>
            <person name="Farrar J."/>
            <person name="Feltwell T."/>
            <person name="Hamlin N."/>
            <person name="Haque A."/>
            <person name="Hien T.T."/>
            <person name="Holroyd S."/>
            <person name="Jagels K."/>
            <person name="Krogh A."/>
            <person name="Larsen T.S."/>
            <person name="Leather S."/>
            <person name="Moule S."/>
            <person name="O'Gaora P."/>
            <person name="Parry C."/>
            <person name="Quail M.A."/>
            <person name="Rutherford K.M."/>
            <person name="Simmonds M."/>
            <person name="Skelton J."/>
            <person name="Stevens K."/>
            <person name="Whitehead S."/>
            <person name="Barrell B.G."/>
        </authorList>
    </citation>
    <scope>NUCLEOTIDE SEQUENCE [LARGE SCALE GENOMIC DNA]</scope>
    <source>
        <strain>CT18</strain>
    </source>
</reference>
<reference key="2">
    <citation type="journal article" date="2003" name="J. Bacteriol.">
        <title>Comparative genomics of Salmonella enterica serovar Typhi strains Ty2 and CT18.</title>
        <authorList>
            <person name="Deng W."/>
            <person name="Liou S.-R."/>
            <person name="Plunkett G. III"/>
            <person name="Mayhew G.F."/>
            <person name="Rose D.J."/>
            <person name="Burland V."/>
            <person name="Kodoyianni V."/>
            <person name="Schwartz D.C."/>
            <person name="Blattner F.R."/>
        </authorList>
    </citation>
    <scope>NUCLEOTIDE SEQUENCE [LARGE SCALE GENOMIC DNA]</scope>
    <source>
        <strain>ATCC 700931 / Ty2</strain>
    </source>
</reference>
<organism>
    <name type="scientific">Salmonella typhi</name>
    <dbReference type="NCBI Taxonomy" id="90370"/>
    <lineage>
        <taxon>Bacteria</taxon>
        <taxon>Pseudomonadati</taxon>
        <taxon>Pseudomonadota</taxon>
        <taxon>Gammaproteobacteria</taxon>
        <taxon>Enterobacterales</taxon>
        <taxon>Enterobacteriaceae</taxon>
        <taxon>Salmonella</taxon>
    </lineage>
</organism>
<feature type="chain" id="PRO_0000122591" description="Aminomethyltransferase">
    <location>
        <begin position="1"/>
        <end position="364"/>
    </location>
</feature>
<accession>P64223</accession>
<accession>Q8XG67</accession>
<gene>
    <name evidence="1" type="primary">gcvT</name>
    <name type="ordered locus">STY3211</name>
    <name type="ordered locus">t2973</name>
</gene>
<dbReference type="EC" id="2.1.2.10" evidence="1"/>
<dbReference type="EMBL" id="AL513382">
    <property type="protein sequence ID" value="CAD02885.1"/>
    <property type="molecule type" value="Genomic_DNA"/>
</dbReference>
<dbReference type="EMBL" id="AE014613">
    <property type="protein sequence ID" value="AAO70525.1"/>
    <property type="molecule type" value="Genomic_DNA"/>
</dbReference>
<dbReference type="RefSeq" id="NP_457453.1">
    <property type="nucleotide sequence ID" value="NC_003198.1"/>
</dbReference>
<dbReference type="RefSeq" id="WP_000068738.1">
    <property type="nucleotide sequence ID" value="NZ_WSUR01000024.1"/>
</dbReference>
<dbReference type="SMR" id="P64223"/>
<dbReference type="STRING" id="220341.gene:17587086"/>
<dbReference type="KEGG" id="stt:t2973"/>
<dbReference type="KEGG" id="sty:STY3211"/>
<dbReference type="PATRIC" id="fig|220341.7.peg.3270"/>
<dbReference type="eggNOG" id="COG0404">
    <property type="taxonomic scope" value="Bacteria"/>
</dbReference>
<dbReference type="HOGENOM" id="CLU_007884_10_2_6"/>
<dbReference type="OMA" id="MPVQYPA"/>
<dbReference type="OrthoDB" id="9774591at2"/>
<dbReference type="Proteomes" id="UP000000541">
    <property type="component" value="Chromosome"/>
</dbReference>
<dbReference type="Proteomes" id="UP000002670">
    <property type="component" value="Chromosome"/>
</dbReference>
<dbReference type="GO" id="GO:0005829">
    <property type="term" value="C:cytosol"/>
    <property type="evidence" value="ECO:0007669"/>
    <property type="project" value="TreeGrafter"/>
</dbReference>
<dbReference type="GO" id="GO:0005960">
    <property type="term" value="C:glycine cleavage complex"/>
    <property type="evidence" value="ECO:0007669"/>
    <property type="project" value="InterPro"/>
</dbReference>
<dbReference type="GO" id="GO:0004047">
    <property type="term" value="F:aminomethyltransferase activity"/>
    <property type="evidence" value="ECO:0007669"/>
    <property type="project" value="UniProtKB-UniRule"/>
</dbReference>
<dbReference type="GO" id="GO:0008483">
    <property type="term" value="F:transaminase activity"/>
    <property type="evidence" value="ECO:0007669"/>
    <property type="project" value="UniProtKB-KW"/>
</dbReference>
<dbReference type="GO" id="GO:0019464">
    <property type="term" value="P:glycine decarboxylation via glycine cleavage system"/>
    <property type="evidence" value="ECO:0007669"/>
    <property type="project" value="UniProtKB-UniRule"/>
</dbReference>
<dbReference type="FunFam" id="2.40.30.110:FF:000001">
    <property type="entry name" value="Aminomethyltransferase"/>
    <property type="match status" value="1"/>
</dbReference>
<dbReference type="FunFam" id="3.30.70.1400:FF:000001">
    <property type="entry name" value="Aminomethyltransferase"/>
    <property type="match status" value="1"/>
</dbReference>
<dbReference type="FunFam" id="4.10.1250.10:FF:000001">
    <property type="entry name" value="Aminomethyltransferase"/>
    <property type="match status" value="1"/>
</dbReference>
<dbReference type="Gene3D" id="2.40.30.110">
    <property type="entry name" value="Aminomethyltransferase beta-barrel domains"/>
    <property type="match status" value="1"/>
</dbReference>
<dbReference type="Gene3D" id="3.30.70.1400">
    <property type="entry name" value="Aminomethyltransferase beta-barrel domains"/>
    <property type="match status" value="1"/>
</dbReference>
<dbReference type="Gene3D" id="4.10.1250.10">
    <property type="entry name" value="Aminomethyltransferase fragment"/>
    <property type="match status" value="1"/>
</dbReference>
<dbReference type="Gene3D" id="3.30.1360.120">
    <property type="entry name" value="Probable tRNA modification gtpase trme, domain 1"/>
    <property type="match status" value="1"/>
</dbReference>
<dbReference type="HAMAP" id="MF_00259">
    <property type="entry name" value="GcvT"/>
    <property type="match status" value="1"/>
</dbReference>
<dbReference type="InterPro" id="IPR006223">
    <property type="entry name" value="GCS_T"/>
</dbReference>
<dbReference type="InterPro" id="IPR022903">
    <property type="entry name" value="GCS_T_bac"/>
</dbReference>
<dbReference type="InterPro" id="IPR013977">
    <property type="entry name" value="GCST_C"/>
</dbReference>
<dbReference type="InterPro" id="IPR006222">
    <property type="entry name" value="GCV_T_N"/>
</dbReference>
<dbReference type="InterPro" id="IPR028896">
    <property type="entry name" value="GcvT/YgfZ/DmdA"/>
</dbReference>
<dbReference type="InterPro" id="IPR029043">
    <property type="entry name" value="GcvT/YgfZ_C"/>
</dbReference>
<dbReference type="InterPro" id="IPR027266">
    <property type="entry name" value="TrmE/GcvT_dom1"/>
</dbReference>
<dbReference type="NCBIfam" id="TIGR00528">
    <property type="entry name" value="gcvT"/>
    <property type="match status" value="1"/>
</dbReference>
<dbReference type="NCBIfam" id="NF001567">
    <property type="entry name" value="PRK00389.1"/>
    <property type="match status" value="1"/>
</dbReference>
<dbReference type="PANTHER" id="PTHR43757">
    <property type="entry name" value="AMINOMETHYLTRANSFERASE"/>
    <property type="match status" value="1"/>
</dbReference>
<dbReference type="PANTHER" id="PTHR43757:SF2">
    <property type="entry name" value="AMINOMETHYLTRANSFERASE, MITOCHONDRIAL"/>
    <property type="match status" value="1"/>
</dbReference>
<dbReference type="Pfam" id="PF01571">
    <property type="entry name" value="GCV_T"/>
    <property type="match status" value="1"/>
</dbReference>
<dbReference type="Pfam" id="PF08669">
    <property type="entry name" value="GCV_T_C"/>
    <property type="match status" value="1"/>
</dbReference>
<dbReference type="PIRSF" id="PIRSF006487">
    <property type="entry name" value="GcvT"/>
    <property type="match status" value="1"/>
</dbReference>
<dbReference type="SUPFAM" id="SSF101790">
    <property type="entry name" value="Aminomethyltransferase beta-barrel domain"/>
    <property type="match status" value="1"/>
</dbReference>
<dbReference type="SUPFAM" id="SSF103025">
    <property type="entry name" value="Folate-binding domain"/>
    <property type="match status" value="1"/>
</dbReference>
<comment type="function">
    <text evidence="1">The glycine cleavage system catalyzes the degradation of glycine.</text>
</comment>
<comment type="catalytic activity">
    <reaction evidence="1">
        <text>N(6)-[(R)-S(8)-aminomethyldihydrolipoyl]-L-lysyl-[protein] + (6S)-5,6,7,8-tetrahydrofolate = N(6)-[(R)-dihydrolipoyl]-L-lysyl-[protein] + (6R)-5,10-methylene-5,6,7,8-tetrahydrofolate + NH4(+)</text>
        <dbReference type="Rhea" id="RHEA:16945"/>
        <dbReference type="Rhea" id="RHEA-COMP:10475"/>
        <dbReference type="Rhea" id="RHEA-COMP:10492"/>
        <dbReference type="ChEBI" id="CHEBI:15636"/>
        <dbReference type="ChEBI" id="CHEBI:28938"/>
        <dbReference type="ChEBI" id="CHEBI:57453"/>
        <dbReference type="ChEBI" id="CHEBI:83100"/>
        <dbReference type="ChEBI" id="CHEBI:83143"/>
        <dbReference type="EC" id="2.1.2.10"/>
    </reaction>
</comment>
<comment type="subunit">
    <text evidence="1">The glycine cleavage system is composed of four proteins: P, T, L and H.</text>
</comment>
<comment type="similarity">
    <text evidence="1">Belongs to the GcvT family.</text>
</comment>
<sequence length="364" mass="40217">MAQQTPLYEQHTLCGARMVDFHGWMMPLHYGSQLDEHHAVRTDAGMFDVSHMTIVDLHGSRTREFLRYLLANDVAKLTKTGKALYSGMLNASGGVIDDLIVYYFTEDFFRLVVNSATREKDLSWITQHAEPYAIDITVRDDLSLIAVQGPNAQEKAATLFTDQQRHAVEGMKPFFGVQAGDLFIATTGYTGEAGYEIAMPNEKAADFWRALVEAGVKPCGLGARDTLRLEAGMNLYGQEMDEGISPLAANMGWTIAWEPADRDFIGREALEMQREKGHEQLVGLVMTEKGVLRNELPVRFTDAQGNQQEGIITSGTFSPTLGYSIALARVPAGIGETAIVQIRNREMPVKVTKPVFVRNGKAVA</sequence>
<evidence type="ECO:0000255" key="1">
    <source>
        <dbReference type="HAMAP-Rule" id="MF_00259"/>
    </source>
</evidence>
<name>GCST_SALTI</name>
<keyword id="KW-0032">Aminotransferase</keyword>
<keyword id="KW-0808">Transferase</keyword>